<proteinExistence type="inferred from homology"/>
<reference key="1">
    <citation type="journal article" date="2010" name="Genome Biol.">
        <title>Structure and dynamics of the pan-genome of Streptococcus pneumoniae and closely related species.</title>
        <authorList>
            <person name="Donati C."/>
            <person name="Hiller N.L."/>
            <person name="Tettelin H."/>
            <person name="Muzzi A."/>
            <person name="Croucher N.J."/>
            <person name="Angiuoli S.V."/>
            <person name="Oggioni M."/>
            <person name="Dunning Hotopp J.C."/>
            <person name="Hu F.Z."/>
            <person name="Riley D.R."/>
            <person name="Covacci A."/>
            <person name="Mitchell T.J."/>
            <person name="Bentley S.D."/>
            <person name="Kilian M."/>
            <person name="Ehrlich G.D."/>
            <person name="Rappuoli R."/>
            <person name="Moxon E.R."/>
            <person name="Masignani V."/>
        </authorList>
    </citation>
    <scope>NUCLEOTIDE SEQUENCE [LARGE SCALE GENOMIC DNA]</scope>
    <source>
        <strain>Taiwan19F-14</strain>
    </source>
</reference>
<accession>C1CSJ8</accession>
<keyword id="KW-0963">Cytoplasm</keyword>
<keyword id="KW-0328">Glycosyltransferase</keyword>
<keyword id="KW-0660">Purine salvage</keyword>
<keyword id="KW-0808">Transferase</keyword>
<protein>
    <recommendedName>
        <fullName evidence="1">Adenine phosphoribosyltransferase</fullName>
        <shortName evidence="1">APRT</shortName>
        <ecNumber evidence="1">2.4.2.7</ecNumber>
    </recommendedName>
</protein>
<comment type="function">
    <text evidence="1">Catalyzes a salvage reaction resulting in the formation of AMP, that is energically less costly than de novo synthesis.</text>
</comment>
<comment type="catalytic activity">
    <reaction evidence="1">
        <text>AMP + diphosphate = 5-phospho-alpha-D-ribose 1-diphosphate + adenine</text>
        <dbReference type="Rhea" id="RHEA:16609"/>
        <dbReference type="ChEBI" id="CHEBI:16708"/>
        <dbReference type="ChEBI" id="CHEBI:33019"/>
        <dbReference type="ChEBI" id="CHEBI:58017"/>
        <dbReference type="ChEBI" id="CHEBI:456215"/>
        <dbReference type="EC" id="2.4.2.7"/>
    </reaction>
</comment>
<comment type="pathway">
    <text evidence="1">Purine metabolism; AMP biosynthesis via salvage pathway; AMP from adenine: step 1/1.</text>
</comment>
<comment type="subunit">
    <text evidence="1">Homodimer.</text>
</comment>
<comment type="subcellular location">
    <subcellularLocation>
        <location evidence="1">Cytoplasm</location>
    </subcellularLocation>
</comment>
<comment type="similarity">
    <text evidence="1">Belongs to the purine/pyrimidine phosphoribosyltransferase family.</text>
</comment>
<organism>
    <name type="scientific">Streptococcus pneumoniae (strain Taiwan19F-14)</name>
    <dbReference type="NCBI Taxonomy" id="487213"/>
    <lineage>
        <taxon>Bacteria</taxon>
        <taxon>Bacillati</taxon>
        <taxon>Bacillota</taxon>
        <taxon>Bacilli</taxon>
        <taxon>Lactobacillales</taxon>
        <taxon>Streptococcaceae</taxon>
        <taxon>Streptococcus</taxon>
    </lineage>
</organism>
<sequence>MNLKDYIATIENYPKEGITFRDISPLMADGNAYSYAVREIVQYATDKKIDMIVGPEARGFIVGCPVAFELGIGFAPVRKPGKLPREVIFADYEKEYGVDTLTMHADAIKPGQRVLIVDDLLATGGTVKATIEMIEKLGGVVAGCAFLVELDELNGREKIGDYDYKVLMHY</sequence>
<evidence type="ECO:0000255" key="1">
    <source>
        <dbReference type="HAMAP-Rule" id="MF_00004"/>
    </source>
</evidence>
<name>APT_STRZT</name>
<gene>
    <name evidence="1" type="primary">apt</name>
    <name type="ordered locus">SPT_1517</name>
</gene>
<feature type="chain" id="PRO_1000116262" description="Adenine phosphoribosyltransferase">
    <location>
        <begin position="1"/>
        <end position="170"/>
    </location>
</feature>
<dbReference type="EC" id="2.4.2.7" evidence="1"/>
<dbReference type="EMBL" id="CP000921">
    <property type="protein sequence ID" value="ACO22611.1"/>
    <property type="molecule type" value="Genomic_DNA"/>
</dbReference>
<dbReference type="RefSeq" id="WP_001049313.1">
    <property type="nucleotide sequence ID" value="NC_012469.1"/>
</dbReference>
<dbReference type="SMR" id="C1CSJ8"/>
<dbReference type="KEGG" id="snt:SPT_1517"/>
<dbReference type="HOGENOM" id="CLU_063339_3_0_9"/>
<dbReference type="UniPathway" id="UPA00588">
    <property type="reaction ID" value="UER00646"/>
</dbReference>
<dbReference type="GO" id="GO:0005737">
    <property type="term" value="C:cytoplasm"/>
    <property type="evidence" value="ECO:0007669"/>
    <property type="project" value="UniProtKB-SubCell"/>
</dbReference>
<dbReference type="GO" id="GO:0002055">
    <property type="term" value="F:adenine binding"/>
    <property type="evidence" value="ECO:0007669"/>
    <property type="project" value="TreeGrafter"/>
</dbReference>
<dbReference type="GO" id="GO:0003999">
    <property type="term" value="F:adenine phosphoribosyltransferase activity"/>
    <property type="evidence" value="ECO:0007669"/>
    <property type="project" value="UniProtKB-UniRule"/>
</dbReference>
<dbReference type="GO" id="GO:0016208">
    <property type="term" value="F:AMP binding"/>
    <property type="evidence" value="ECO:0007669"/>
    <property type="project" value="TreeGrafter"/>
</dbReference>
<dbReference type="GO" id="GO:0006168">
    <property type="term" value="P:adenine salvage"/>
    <property type="evidence" value="ECO:0007669"/>
    <property type="project" value="InterPro"/>
</dbReference>
<dbReference type="GO" id="GO:0044209">
    <property type="term" value="P:AMP salvage"/>
    <property type="evidence" value="ECO:0007669"/>
    <property type="project" value="UniProtKB-UniRule"/>
</dbReference>
<dbReference type="GO" id="GO:0006166">
    <property type="term" value="P:purine ribonucleoside salvage"/>
    <property type="evidence" value="ECO:0007669"/>
    <property type="project" value="UniProtKB-KW"/>
</dbReference>
<dbReference type="CDD" id="cd06223">
    <property type="entry name" value="PRTases_typeI"/>
    <property type="match status" value="1"/>
</dbReference>
<dbReference type="FunFam" id="3.40.50.2020:FF:000004">
    <property type="entry name" value="Adenine phosphoribosyltransferase"/>
    <property type="match status" value="1"/>
</dbReference>
<dbReference type="Gene3D" id="3.40.50.2020">
    <property type="match status" value="1"/>
</dbReference>
<dbReference type="HAMAP" id="MF_00004">
    <property type="entry name" value="Aden_phosphoribosyltr"/>
    <property type="match status" value="1"/>
</dbReference>
<dbReference type="InterPro" id="IPR005764">
    <property type="entry name" value="Ade_phspho_trans"/>
</dbReference>
<dbReference type="InterPro" id="IPR000836">
    <property type="entry name" value="PRibTrfase_dom"/>
</dbReference>
<dbReference type="InterPro" id="IPR029057">
    <property type="entry name" value="PRTase-like"/>
</dbReference>
<dbReference type="InterPro" id="IPR050054">
    <property type="entry name" value="UPRTase/APRTase"/>
</dbReference>
<dbReference type="NCBIfam" id="TIGR01090">
    <property type="entry name" value="apt"/>
    <property type="match status" value="1"/>
</dbReference>
<dbReference type="NCBIfam" id="NF002633">
    <property type="entry name" value="PRK02304.1-2"/>
    <property type="match status" value="1"/>
</dbReference>
<dbReference type="NCBIfam" id="NF002634">
    <property type="entry name" value="PRK02304.1-3"/>
    <property type="match status" value="1"/>
</dbReference>
<dbReference type="NCBIfam" id="NF002636">
    <property type="entry name" value="PRK02304.1-5"/>
    <property type="match status" value="1"/>
</dbReference>
<dbReference type="PANTHER" id="PTHR32315">
    <property type="entry name" value="ADENINE PHOSPHORIBOSYLTRANSFERASE"/>
    <property type="match status" value="1"/>
</dbReference>
<dbReference type="PANTHER" id="PTHR32315:SF3">
    <property type="entry name" value="ADENINE PHOSPHORIBOSYLTRANSFERASE"/>
    <property type="match status" value="1"/>
</dbReference>
<dbReference type="Pfam" id="PF00156">
    <property type="entry name" value="Pribosyltran"/>
    <property type="match status" value="1"/>
</dbReference>
<dbReference type="SUPFAM" id="SSF53271">
    <property type="entry name" value="PRTase-like"/>
    <property type="match status" value="1"/>
</dbReference>
<dbReference type="PROSITE" id="PS00103">
    <property type="entry name" value="PUR_PYR_PR_TRANSFER"/>
    <property type="match status" value="1"/>
</dbReference>